<name>BL1S4_YEAST</name>
<dbReference type="EMBL" id="U28372">
    <property type="protein sequence ID" value="AAB64792.1"/>
    <property type="molecule type" value="Genomic_DNA"/>
</dbReference>
<dbReference type="EMBL" id="AY557723">
    <property type="protein sequence ID" value="AAS56049.1"/>
    <property type="molecule type" value="Genomic_DNA"/>
</dbReference>
<dbReference type="EMBL" id="BK006938">
    <property type="protein sequence ID" value="DAA12196.1"/>
    <property type="molecule type" value="Genomic_DNA"/>
</dbReference>
<dbReference type="PIR" id="S61153">
    <property type="entry name" value="S61153"/>
</dbReference>
<dbReference type="RefSeq" id="NP_010644.1">
    <property type="nucleotide sequence ID" value="NM_001180665.1"/>
</dbReference>
<dbReference type="SMR" id="Q06333"/>
<dbReference type="BioGRID" id="32413">
    <property type="interactions" value="77"/>
</dbReference>
<dbReference type="ComplexPortal" id="CPX-1153">
    <property type="entry name" value="BLOC-1 complex"/>
</dbReference>
<dbReference type="DIP" id="DIP-1844N"/>
<dbReference type="FunCoup" id="Q06333">
    <property type="interactions" value="47"/>
</dbReference>
<dbReference type="IntAct" id="Q06333">
    <property type="interactions" value="8"/>
</dbReference>
<dbReference type="MINT" id="Q06333"/>
<dbReference type="STRING" id="4932.YDR357C"/>
<dbReference type="iPTMnet" id="Q06333"/>
<dbReference type="PaxDb" id="4932-YDR357C"/>
<dbReference type="PeptideAtlas" id="Q06333"/>
<dbReference type="EnsemblFungi" id="YDR357C_mRNA">
    <property type="protein sequence ID" value="YDR357C"/>
    <property type="gene ID" value="YDR357C"/>
</dbReference>
<dbReference type="GeneID" id="851959"/>
<dbReference type="KEGG" id="sce:YDR357C"/>
<dbReference type="AGR" id="SGD:S000002765"/>
<dbReference type="SGD" id="S000002765">
    <property type="gene designation" value="CNL1"/>
</dbReference>
<dbReference type="VEuPathDB" id="FungiDB:YDR357C"/>
<dbReference type="eggNOG" id="ENOG502S4DQ">
    <property type="taxonomic scope" value="Eukaryota"/>
</dbReference>
<dbReference type="HOGENOM" id="CLU_141728_1_0_1"/>
<dbReference type="InParanoid" id="Q06333"/>
<dbReference type="OMA" id="HFDMLDQ"/>
<dbReference type="OrthoDB" id="5424991at2759"/>
<dbReference type="BioCyc" id="YEAST:G3O-29908-MONOMER"/>
<dbReference type="BioGRID-ORCS" id="851959">
    <property type="hits" value="0 hits in 10 CRISPR screens"/>
</dbReference>
<dbReference type="PRO" id="PR:Q06333"/>
<dbReference type="Proteomes" id="UP000002311">
    <property type="component" value="Chromosome IV"/>
</dbReference>
<dbReference type="RNAct" id="Q06333">
    <property type="molecule type" value="protein"/>
</dbReference>
<dbReference type="GO" id="GO:0031083">
    <property type="term" value="C:BLOC-1 complex"/>
    <property type="evidence" value="ECO:0000314"/>
    <property type="project" value="SGD"/>
</dbReference>
<dbReference type="GO" id="GO:0005737">
    <property type="term" value="C:cytoplasm"/>
    <property type="evidence" value="ECO:0007005"/>
    <property type="project" value="SGD"/>
</dbReference>
<dbReference type="GO" id="GO:0005768">
    <property type="term" value="C:endosome"/>
    <property type="evidence" value="ECO:0000314"/>
    <property type="project" value="ComplexPortal"/>
</dbReference>
<dbReference type="GO" id="GO:0007032">
    <property type="term" value="P:endosome organization"/>
    <property type="evidence" value="ECO:0000315"/>
    <property type="project" value="SGD"/>
</dbReference>
<dbReference type="GO" id="GO:0032880">
    <property type="term" value="P:regulation of protein localization"/>
    <property type="evidence" value="ECO:0000315"/>
    <property type="project" value="SGD"/>
</dbReference>
<dbReference type="CDD" id="cd24144">
    <property type="entry name" value="BLOC1_CNL1"/>
    <property type="match status" value="1"/>
</dbReference>
<dbReference type="InterPro" id="IPR034455">
    <property type="entry name" value="CNL1"/>
</dbReference>
<dbReference type="PANTHER" id="PTHR39145">
    <property type="entry name" value="BIOGENESIS OF LYSOSOME-RELATED ORGANELLES COMPLEX 1 SUBUNIT CNL1"/>
    <property type="match status" value="1"/>
</dbReference>
<dbReference type="PANTHER" id="PTHR39145:SF1">
    <property type="entry name" value="BIOGENESIS OF LYSOSOME-RELATED ORGANELLES COMPLEX 1 SUBUNIT CNL1"/>
    <property type="match status" value="1"/>
</dbReference>
<evidence type="ECO:0000255" key="1"/>
<evidence type="ECO:0000256" key="2">
    <source>
        <dbReference type="SAM" id="MobiDB-lite"/>
    </source>
</evidence>
<evidence type="ECO:0000269" key="3">
    <source>
    </source>
</evidence>
<evidence type="ECO:0000269" key="4">
    <source>
    </source>
</evidence>
<evidence type="ECO:0000269" key="5">
    <source>
    </source>
</evidence>
<evidence type="ECO:0000305" key="6"/>
<reference key="1">
    <citation type="journal article" date="1997" name="Nature">
        <title>The nucleotide sequence of Saccharomyces cerevisiae chromosome IV.</title>
        <authorList>
            <person name="Jacq C."/>
            <person name="Alt-Moerbe J."/>
            <person name="Andre B."/>
            <person name="Arnold W."/>
            <person name="Bahr A."/>
            <person name="Ballesta J.P.G."/>
            <person name="Bargues M."/>
            <person name="Baron L."/>
            <person name="Becker A."/>
            <person name="Biteau N."/>
            <person name="Bloecker H."/>
            <person name="Blugeon C."/>
            <person name="Boskovic J."/>
            <person name="Brandt P."/>
            <person name="Brueckner M."/>
            <person name="Buitrago M.J."/>
            <person name="Coster F."/>
            <person name="Delaveau T."/>
            <person name="del Rey F."/>
            <person name="Dujon B."/>
            <person name="Eide L.G."/>
            <person name="Garcia-Cantalejo J.M."/>
            <person name="Goffeau A."/>
            <person name="Gomez-Peris A."/>
            <person name="Granotier C."/>
            <person name="Hanemann V."/>
            <person name="Hankeln T."/>
            <person name="Hoheisel J.D."/>
            <person name="Jaeger W."/>
            <person name="Jimenez A."/>
            <person name="Jonniaux J.-L."/>
            <person name="Kraemer C."/>
            <person name="Kuester H."/>
            <person name="Laamanen P."/>
            <person name="Legros Y."/>
            <person name="Louis E.J."/>
            <person name="Moeller-Rieker S."/>
            <person name="Monnet A."/>
            <person name="Moro M."/>
            <person name="Mueller-Auer S."/>
            <person name="Nussbaumer B."/>
            <person name="Paricio N."/>
            <person name="Paulin L."/>
            <person name="Perea J."/>
            <person name="Perez-Alonso M."/>
            <person name="Perez-Ortin J.E."/>
            <person name="Pohl T.M."/>
            <person name="Prydz H."/>
            <person name="Purnelle B."/>
            <person name="Rasmussen S.W."/>
            <person name="Remacha M.A."/>
            <person name="Revuelta J.L."/>
            <person name="Rieger M."/>
            <person name="Salom D."/>
            <person name="Saluz H.P."/>
            <person name="Saiz J.E."/>
            <person name="Saren A.-M."/>
            <person name="Schaefer M."/>
            <person name="Scharfe M."/>
            <person name="Schmidt E.R."/>
            <person name="Schneider C."/>
            <person name="Scholler P."/>
            <person name="Schwarz S."/>
            <person name="Soler-Mira A."/>
            <person name="Urrestarazu L.A."/>
            <person name="Verhasselt P."/>
            <person name="Vissers S."/>
            <person name="Voet M."/>
            <person name="Volckaert G."/>
            <person name="Wagner G."/>
            <person name="Wambutt R."/>
            <person name="Wedler E."/>
            <person name="Wedler H."/>
            <person name="Woelfl S."/>
            <person name="Harris D.E."/>
            <person name="Bowman S."/>
            <person name="Brown D."/>
            <person name="Churcher C.M."/>
            <person name="Connor R."/>
            <person name="Dedman K."/>
            <person name="Gentles S."/>
            <person name="Hamlin N."/>
            <person name="Hunt S."/>
            <person name="Jones L."/>
            <person name="McDonald S."/>
            <person name="Murphy L.D."/>
            <person name="Niblett D."/>
            <person name="Odell C."/>
            <person name="Oliver K."/>
            <person name="Rajandream M.A."/>
            <person name="Richards C."/>
            <person name="Shore L."/>
            <person name="Walsh S.V."/>
            <person name="Barrell B.G."/>
            <person name="Dietrich F.S."/>
            <person name="Mulligan J.T."/>
            <person name="Allen E."/>
            <person name="Araujo R."/>
            <person name="Aviles E."/>
            <person name="Berno A."/>
            <person name="Carpenter J."/>
            <person name="Chen E."/>
            <person name="Cherry J.M."/>
            <person name="Chung E."/>
            <person name="Duncan M."/>
            <person name="Hunicke-Smith S."/>
            <person name="Hyman R.W."/>
            <person name="Komp C."/>
            <person name="Lashkari D."/>
            <person name="Lew H."/>
            <person name="Lin D."/>
            <person name="Mosedale D."/>
            <person name="Nakahara K."/>
            <person name="Namath A."/>
            <person name="Oefner P."/>
            <person name="Oh C."/>
            <person name="Petel F.X."/>
            <person name="Roberts D."/>
            <person name="Schramm S."/>
            <person name="Schroeder M."/>
            <person name="Shogren T."/>
            <person name="Shroff N."/>
            <person name="Winant A."/>
            <person name="Yelton M.A."/>
            <person name="Botstein D."/>
            <person name="Davis R.W."/>
            <person name="Johnston M."/>
            <person name="Andrews S."/>
            <person name="Brinkman R."/>
            <person name="Cooper J."/>
            <person name="Ding H."/>
            <person name="Du Z."/>
            <person name="Favello A."/>
            <person name="Fulton L."/>
            <person name="Gattung S."/>
            <person name="Greco T."/>
            <person name="Hallsworth K."/>
            <person name="Hawkins J."/>
            <person name="Hillier L.W."/>
            <person name="Jier M."/>
            <person name="Johnson D."/>
            <person name="Johnston L."/>
            <person name="Kirsten J."/>
            <person name="Kucaba T."/>
            <person name="Langston Y."/>
            <person name="Latreille P."/>
            <person name="Le T."/>
            <person name="Mardis E."/>
            <person name="Menezes S."/>
            <person name="Miller N."/>
            <person name="Nhan M."/>
            <person name="Pauley A."/>
            <person name="Peluso D."/>
            <person name="Rifkin L."/>
            <person name="Riles L."/>
            <person name="Taich A."/>
            <person name="Trevaskis E."/>
            <person name="Vignati D."/>
            <person name="Wilcox L."/>
            <person name="Wohldman P."/>
            <person name="Vaudin M."/>
            <person name="Wilson R."/>
            <person name="Waterston R."/>
            <person name="Albermann K."/>
            <person name="Hani J."/>
            <person name="Heumann K."/>
            <person name="Kleine K."/>
            <person name="Mewes H.-W."/>
            <person name="Zollner A."/>
            <person name="Zaccaria P."/>
        </authorList>
    </citation>
    <scope>NUCLEOTIDE SEQUENCE [LARGE SCALE GENOMIC DNA]</scope>
    <source>
        <strain>ATCC 204508 / S288c</strain>
    </source>
</reference>
<reference key="2">
    <citation type="journal article" date="2014" name="G3 (Bethesda)">
        <title>The reference genome sequence of Saccharomyces cerevisiae: Then and now.</title>
        <authorList>
            <person name="Engel S.R."/>
            <person name="Dietrich F.S."/>
            <person name="Fisk D.G."/>
            <person name="Binkley G."/>
            <person name="Balakrishnan R."/>
            <person name="Costanzo M.C."/>
            <person name="Dwight S.S."/>
            <person name="Hitz B.C."/>
            <person name="Karra K."/>
            <person name="Nash R.S."/>
            <person name="Weng S."/>
            <person name="Wong E.D."/>
            <person name="Lloyd P."/>
            <person name="Skrzypek M.S."/>
            <person name="Miyasato S.R."/>
            <person name="Simison M."/>
            <person name="Cherry J.M."/>
        </authorList>
    </citation>
    <scope>GENOME REANNOTATION</scope>
    <source>
        <strain>ATCC 204508 / S288c</strain>
    </source>
</reference>
<reference key="3">
    <citation type="journal article" date="2007" name="Genome Res.">
        <title>Approaching a complete repository of sequence-verified protein-encoding clones for Saccharomyces cerevisiae.</title>
        <authorList>
            <person name="Hu Y."/>
            <person name="Rolfs A."/>
            <person name="Bhullar B."/>
            <person name="Murthy T.V.S."/>
            <person name="Zhu C."/>
            <person name="Berger M.F."/>
            <person name="Camargo A.A."/>
            <person name="Kelley F."/>
            <person name="McCarron S."/>
            <person name="Jepson D."/>
            <person name="Richardson A."/>
            <person name="Raphael J."/>
            <person name="Moreira D."/>
            <person name="Taycher E."/>
            <person name="Zuo D."/>
            <person name="Mohr S."/>
            <person name="Kane M.F."/>
            <person name="Williamson J."/>
            <person name="Simpson A.J.G."/>
            <person name="Bulyk M.L."/>
            <person name="Harlow E."/>
            <person name="Marsischky G."/>
            <person name="Kolodner R.D."/>
            <person name="LaBaer J."/>
        </authorList>
    </citation>
    <scope>NUCLEOTIDE SEQUENCE [GENOMIC DNA]</scope>
    <source>
        <strain>ATCC 204508 / S288c</strain>
    </source>
</reference>
<reference key="4">
    <citation type="journal article" date="2003" name="Nature">
        <title>Global analysis of protein localization in budding yeast.</title>
        <authorList>
            <person name="Huh W.-K."/>
            <person name="Falvo J.V."/>
            <person name="Gerke L.C."/>
            <person name="Carroll A.S."/>
            <person name="Howson R.W."/>
            <person name="Weissman J.S."/>
            <person name="O'Shea E.K."/>
        </authorList>
    </citation>
    <scope>SUBCELLULAR LOCATION [LARGE SCALE ANALYSIS]</scope>
</reference>
<reference key="5">
    <citation type="journal article" date="2003" name="Nature">
        <title>Global analysis of protein expression in yeast.</title>
        <authorList>
            <person name="Ghaemmaghami S."/>
            <person name="Huh W.-K."/>
            <person name="Bower K."/>
            <person name="Howson R.W."/>
            <person name="Belle A."/>
            <person name="Dephoure N."/>
            <person name="O'Shea E.K."/>
            <person name="Weissman J.S."/>
        </authorList>
    </citation>
    <scope>LEVEL OF PROTEIN EXPRESSION [LARGE SCALE ANALYSIS]</scope>
</reference>
<reference key="6">
    <citation type="journal article" date="2009" name="Science">
        <title>Global analysis of Cdk1 substrate phosphorylation sites provides insights into evolution.</title>
        <authorList>
            <person name="Holt L.J."/>
            <person name="Tuch B.B."/>
            <person name="Villen J."/>
            <person name="Johnson A.D."/>
            <person name="Gygi S.P."/>
            <person name="Morgan D.O."/>
        </authorList>
    </citation>
    <scope>IDENTIFICATION BY MASS SPECTROMETRY [LARGE SCALE ANALYSIS]</scope>
</reference>
<reference key="7">
    <citation type="journal article" date="2011" name="Traffic">
        <title>Yeast homologues of three BLOC-1 subunits highlight KxDL proteins as conserved interactors of BLOC-1.</title>
        <authorList>
            <person name="Hayes M.J."/>
            <person name="Bryon K."/>
            <person name="Satkurunathan J."/>
            <person name="Levine T.P."/>
        </authorList>
    </citation>
    <scope>IDENTIFICATION IN THE BLOC-1 COMPLEX</scope>
    <scope>FUNCTION</scope>
</reference>
<sequence length="122" mass="13957">MQDNSSHSRESASAGDDPLGIDKLTVDYDYLLYKMRDYVQSIQLDTTELCKKQNEVMVNGIIENTIDKNIAKFKELLEKCDTLENHYEMLNQLAIITDTFKERIAEAVNNYNSLKKGASKSK</sequence>
<proteinExistence type="evidence at protein level"/>
<organism>
    <name type="scientific">Saccharomyces cerevisiae (strain ATCC 204508 / S288c)</name>
    <name type="common">Baker's yeast</name>
    <dbReference type="NCBI Taxonomy" id="559292"/>
    <lineage>
        <taxon>Eukaryota</taxon>
        <taxon>Fungi</taxon>
        <taxon>Dikarya</taxon>
        <taxon>Ascomycota</taxon>
        <taxon>Saccharomycotina</taxon>
        <taxon>Saccharomycetes</taxon>
        <taxon>Saccharomycetales</taxon>
        <taxon>Saccharomycetaceae</taxon>
        <taxon>Saccharomyces</taxon>
    </lineage>
</organism>
<comment type="function">
    <text evidence="5">Component of the biogenesis of lysosome-related organelles complex-1 (BLOC-1), a complex that is involved in endosomal cargo sorting.</text>
</comment>
<comment type="subunit">
    <text evidence="5">Component of the biogenesis of lysosome-related organelles complex-1 (BLOC-1) composed of at least BLI1, BLS1, CNL1, KXD1, SNN1 and VAB2.</text>
</comment>
<comment type="interaction">
    <interactant intactId="EBI-31100">
        <id>Q06333</id>
    </interactant>
    <interactant intactId="EBI-3700144">
        <id>Q06071</id>
        <label>BLS1</label>
    </interactant>
    <organismsDiffer>false</organismsDiffer>
    <experiments>2</experiments>
</comment>
<comment type="subcellular location">
    <subcellularLocation>
        <location evidence="3">Cytoplasm</location>
    </subcellularLocation>
    <text>Punctate pattern.</text>
</comment>
<comment type="miscellaneous">
    <text evidence="4">Present with 589 molecules/cell in log phase SD medium.</text>
</comment>
<comment type="similarity">
    <text evidence="6">Belongs to the BLOC1S4 family.</text>
</comment>
<feature type="chain" id="PRO_0000253844" description="Biogenesis of lysosome-related organelles complex 1 subunit CNL1">
    <location>
        <begin position="1"/>
        <end position="122"/>
    </location>
</feature>
<feature type="region of interest" description="Disordered" evidence="2">
    <location>
        <begin position="1"/>
        <end position="21"/>
    </location>
</feature>
<feature type="coiled-coil region" evidence="1">
    <location>
        <begin position="63"/>
        <end position="95"/>
    </location>
</feature>
<feature type="compositionally biased region" description="Basic and acidic residues" evidence="2">
    <location>
        <begin position="1"/>
        <end position="10"/>
    </location>
</feature>
<keyword id="KW-0175">Coiled coil</keyword>
<keyword id="KW-0963">Cytoplasm</keyword>
<keyword id="KW-1185">Reference proteome</keyword>
<keyword id="KW-0813">Transport</keyword>
<protein>
    <recommendedName>
        <fullName>Biogenesis of lysosome-related organelles complex 1 subunit CNL1</fullName>
        <shortName>BLOC-1 subunit CNL1</shortName>
    </recommendedName>
    <alternativeName>
        <fullName>CNO-like protein 1</fullName>
    </alternativeName>
</protein>
<accession>Q06333</accession>
<accession>D6VSY6</accession>
<gene>
    <name type="primary">CNL1</name>
    <name type="ordered locus">YDR357C</name>
</gene>